<proteinExistence type="inferred from homology"/>
<keyword id="KW-0143">Chaperone</keyword>
<keyword id="KW-0574">Periplasm</keyword>
<keyword id="KW-0653">Protein transport</keyword>
<keyword id="KW-1185">Reference proteome</keyword>
<keyword id="KW-0732">Signal</keyword>
<keyword id="KW-0813">Transport</keyword>
<sequence length="208" mass="23438">MKRTATLLVVALILALNTAQAGQLQALEDYYRDVETVQGVFNQFTLDDRGQVIEESSGDFAIHRPDRFHWSYAGPFSQEIIADGERLWVYDVELDQVTVRDQRAVLGSAPAQLLSGDYADLEELFELAETEDYVRLTPRDGGEAFDEARLGMRDGHPSALEIDDALGQVTRVELDEVRLNDAVDEERFRFEPPEGVDVYEADPDEGIR</sequence>
<evidence type="ECO:0000255" key="1">
    <source>
        <dbReference type="HAMAP-Rule" id="MF_00240"/>
    </source>
</evidence>
<comment type="function">
    <text evidence="1">Participates in the translocation of lipoproteins from the inner membrane to the outer membrane. Only forms a complex with a lipoprotein if the residue after the N-terminal Cys is not an aspartate (The Asp acts as a targeting signal to indicate that the lipoprotein should stay in the inner membrane).</text>
</comment>
<comment type="subunit">
    <text evidence="1">Monomer.</text>
</comment>
<comment type="subcellular location">
    <subcellularLocation>
        <location evidence="1">Periplasm</location>
    </subcellularLocation>
</comment>
<comment type="similarity">
    <text evidence="1">Belongs to the LolA family.</text>
</comment>
<protein>
    <recommendedName>
        <fullName evidence="1">Outer-membrane lipoprotein carrier protein</fullName>
    </recommendedName>
</protein>
<organism>
    <name type="scientific">Halorhodospira halophila (strain DSM 244 / SL1)</name>
    <name type="common">Ectothiorhodospira halophila (strain DSM 244 / SL1)</name>
    <dbReference type="NCBI Taxonomy" id="349124"/>
    <lineage>
        <taxon>Bacteria</taxon>
        <taxon>Pseudomonadati</taxon>
        <taxon>Pseudomonadota</taxon>
        <taxon>Gammaproteobacteria</taxon>
        <taxon>Chromatiales</taxon>
        <taxon>Ectothiorhodospiraceae</taxon>
        <taxon>Halorhodospira</taxon>
    </lineage>
</organism>
<dbReference type="EMBL" id="CP000544">
    <property type="protein sequence ID" value="ABM62161.1"/>
    <property type="molecule type" value="Genomic_DNA"/>
</dbReference>
<dbReference type="RefSeq" id="WP_011814183.1">
    <property type="nucleotide sequence ID" value="NC_008789.1"/>
</dbReference>
<dbReference type="SMR" id="A1WWU9"/>
<dbReference type="STRING" id="349124.Hhal_1394"/>
<dbReference type="KEGG" id="hha:Hhal_1394"/>
<dbReference type="eggNOG" id="COG2834">
    <property type="taxonomic scope" value="Bacteria"/>
</dbReference>
<dbReference type="HOGENOM" id="CLU_087560_0_0_6"/>
<dbReference type="OrthoDB" id="9787361at2"/>
<dbReference type="Proteomes" id="UP000000647">
    <property type="component" value="Chromosome"/>
</dbReference>
<dbReference type="GO" id="GO:0030288">
    <property type="term" value="C:outer membrane-bounded periplasmic space"/>
    <property type="evidence" value="ECO:0007669"/>
    <property type="project" value="TreeGrafter"/>
</dbReference>
<dbReference type="GO" id="GO:0044874">
    <property type="term" value="P:lipoprotein localization to outer membrane"/>
    <property type="evidence" value="ECO:0007669"/>
    <property type="project" value="UniProtKB-UniRule"/>
</dbReference>
<dbReference type="GO" id="GO:0042953">
    <property type="term" value="P:lipoprotein transport"/>
    <property type="evidence" value="ECO:0007669"/>
    <property type="project" value="InterPro"/>
</dbReference>
<dbReference type="CDD" id="cd16325">
    <property type="entry name" value="LolA"/>
    <property type="match status" value="1"/>
</dbReference>
<dbReference type="Gene3D" id="2.50.20.10">
    <property type="entry name" value="Lipoprotein localisation LolA/LolB/LppX"/>
    <property type="match status" value="1"/>
</dbReference>
<dbReference type="HAMAP" id="MF_00240">
    <property type="entry name" value="LolA"/>
    <property type="match status" value="1"/>
</dbReference>
<dbReference type="InterPro" id="IPR029046">
    <property type="entry name" value="LolA/LolB/LppX"/>
</dbReference>
<dbReference type="InterPro" id="IPR004564">
    <property type="entry name" value="OM_lipoprot_carrier_LolA-like"/>
</dbReference>
<dbReference type="InterPro" id="IPR018323">
    <property type="entry name" value="OM_lipoprot_carrier_LolA_Pbac"/>
</dbReference>
<dbReference type="NCBIfam" id="TIGR00547">
    <property type="entry name" value="lolA"/>
    <property type="match status" value="1"/>
</dbReference>
<dbReference type="PANTHER" id="PTHR35869">
    <property type="entry name" value="OUTER-MEMBRANE LIPOPROTEIN CARRIER PROTEIN"/>
    <property type="match status" value="1"/>
</dbReference>
<dbReference type="PANTHER" id="PTHR35869:SF1">
    <property type="entry name" value="OUTER-MEMBRANE LIPOPROTEIN CARRIER PROTEIN"/>
    <property type="match status" value="1"/>
</dbReference>
<dbReference type="Pfam" id="PF03548">
    <property type="entry name" value="LolA"/>
    <property type="match status" value="1"/>
</dbReference>
<dbReference type="SUPFAM" id="SSF89392">
    <property type="entry name" value="Prokaryotic lipoproteins and lipoprotein localization factors"/>
    <property type="match status" value="1"/>
</dbReference>
<feature type="signal peptide" evidence="1">
    <location>
        <begin position="1"/>
        <end position="21"/>
    </location>
</feature>
<feature type="chain" id="PRO_5000213405" description="Outer-membrane lipoprotein carrier protein">
    <location>
        <begin position="22"/>
        <end position="208"/>
    </location>
</feature>
<gene>
    <name evidence="1" type="primary">lolA</name>
    <name type="ordered locus">Hhal_1394</name>
</gene>
<accession>A1WWU9</accession>
<reference key="1">
    <citation type="submission" date="2006-12" db="EMBL/GenBank/DDBJ databases">
        <title>Complete sequence of Halorhodospira halophila SL1.</title>
        <authorList>
            <consortium name="US DOE Joint Genome Institute"/>
            <person name="Copeland A."/>
            <person name="Lucas S."/>
            <person name="Lapidus A."/>
            <person name="Barry K."/>
            <person name="Detter J.C."/>
            <person name="Glavina del Rio T."/>
            <person name="Hammon N."/>
            <person name="Israni S."/>
            <person name="Dalin E."/>
            <person name="Tice H."/>
            <person name="Pitluck S."/>
            <person name="Saunders E."/>
            <person name="Brettin T."/>
            <person name="Bruce D."/>
            <person name="Han C."/>
            <person name="Tapia R."/>
            <person name="Schmutz J."/>
            <person name="Larimer F."/>
            <person name="Land M."/>
            <person name="Hauser L."/>
            <person name="Kyrpides N."/>
            <person name="Mikhailova N."/>
            <person name="Hoff W."/>
            <person name="Richardson P."/>
        </authorList>
    </citation>
    <scope>NUCLEOTIDE SEQUENCE [LARGE SCALE GENOMIC DNA]</scope>
    <source>
        <strain>DSM 244 / SL1</strain>
    </source>
</reference>
<name>LOLA_HALHL</name>